<sequence>MSEAEARPTNFIRQIIDEDLASGKHITVHTRFPPEPNGYLHIGHAKSICLNFGIAQDYKGQCNLRFDDTNPVKEDIEYVDSIKNDVEWLGFHWSGNVRYSSDYFDQLHAYAIELINKGLAYVDELTPEQIREYRGTLTQPGKNSPYRDRSVEENLALFEKMRAGGFEEGKACLRAKIDMASPFIVMRDPVLYRIKFAEHHQTGNKWCIYPMYDFTHCISDALEGITHSLCTLEFQDNRRLYDWVLDNITIPVHPRQYEFSRLNLEYTVMSKRKLNLLVTDKHVEGWDDPRMPTISGLRRRGYTAASIREFCKRIGVTKQDNTIEMASLESCIREDLNENAPRAMAVIDPVKLVIENYQGEGEMVTMPNHPNKPEMGSRQVPFSGEIWIDRADFREEANKQYKRLVLGKEVRLRNAYVIKAERVEKDAEGNITTIFCTYDADTLSKDPADGRKVKGVIHWVSAAHALPVEIRLYDRLFSVPNPGAADDFLSVINPESLVIKQGFAEPSLKDAVAGKAFQFEREGYFCLDSRHSTAEKPVFNRTVGLRDTWAKVGE</sequence>
<organism>
    <name type="scientific">Shigella flexneri serotype 5b (strain 8401)</name>
    <dbReference type="NCBI Taxonomy" id="373384"/>
    <lineage>
        <taxon>Bacteria</taxon>
        <taxon>Pseudomonadati</taxon>
        <taxon>Pseudomonadota</taxon>
        <taxon>Gammaproteobacteria</taxon>
        <taxon>Enterobacterales</taxon>
        <taxon>Enterobacteriaceae</taxon>
        <taxon>Shigella</taxon>
    </lineage>
</organism>
<keyword id="KW-0030">Aminoacyl-tRNA synthetase</keyword>
<keyword id="KW-0067">ATP-binding</keyword>
<keyword id="KW-0963">Cytoplasm</keyword>
<keyword id="KW-0436">Ligase</keyword>
<keyword id="KW-0547">Nucleotide-binding</keyword>
<keyword id="KW-0648">Protein biosynthesis</keyword>
<reference key="1">
    <citation type="journal article" date="2006" name="BMC Genomics">
        <title>Complete genome sequence of Shigella flexneri 5b and comparison with Shigella flexneri 2a.</title>
        <authorList>
            <person name="Nie H."/>
            <person name="Yang F."/>
            <person name="Zhang X."/>
            <person name="Yang J."/>
            <person name="Chen L."/>
            <person name="Wang J."/>
            <person name="Xiong Z."/>
            <person name="Peng J."/>
            <person name="Sun L."/>
            <person name="Dong J."/>
            <person name="Xue Y."/>
            <person name="Xu X."/>
            <person name="Chen S."/>
            <person name="Yao Z."/>
            <person name="Shen Y."/>
            <person name="Jin Q."/>
        </authorList>
    </citation>
    <scope>NUCLEOTIDE SEQUENCE [LARGE SCALE GENOMIC DNA]</scope>
    <source>
        <strain>8401</strain>
    </source>
</reference>
<accession>Q0T6S8</accession>
<evidence type="ECO:0000255" key="1">
    <source>
        <dbReference type="HAMAP-Rule" id="MF_00126"/>
    </source>
</evidence>
<proteinExistence type="inferred from homology"/>
<gene>
    <name evidence="1" type="primary">glnS</name>
    <name type="ordered locus">SFV_0651</name>
</gene>
<dbReference type="EC" id="6.1.1.18" evidence="1"/>
<dbReference type="EMBL" id="CP000266">
    <property type="protein sequence ID" value="ABF02898.1"/>
    <property type="molecule type" value="Genomic_DNA"/>
</dbReference>
<dbReference type="RefSeq" id="WP_001287126.1">
    <property type="nucleotide sequence ID" value="NC_008258.1"/>
</dbReference>
<dbReference type="SMR" id="Q0T6S8"/>
<dbReference type="KEGG" id="sfv:SFV_0651"/>
<dbReference type="HOGENOM" id="CLU_001882_2_3_6"/>
<dbReference type="Proteomes" id="UP000000659">
    <property type="component" value="Chromosome"/>
</dbReference>
<dbReference type="GO" id="GO:0005829">
    <property type="term" value="C:cytosol"/>
    <property type="evidence" value="ECO:0007669"/>
    <property type="project" value="TreeGrafter"/>
</dbReference>
<dbReference type="GO" id="GO:0005524">
    <property type="term" value="F:ATP binding"/>
    <property type="evidence" value="ECO:0007669"/>
    <property type="project" value="UniProtKB-UniRule"/>
</dbReference>
<dbReference type="GO" id="GO:0004819">
    <property type="term" value="F:glutamine-tRNA ligase activity"/>
    <property type="evidence" value="ECO:0007669"/>
    <property type="project" value="UniProtKB-UniRule"/>
</dbReference>
<dbReference type="GO" id="GO:0006425">
    <property type="term" value="P:glutaminyl-tRNA aminoacylation"/>
    <property type="evidence" value="ECO:0007669"/>
    <property type="project" value="InterPro"/>
</dbReference>
<dbReference type="GO" id="GO:0006424">
    <property type="term" value="P:glutamyl-tRNA aminoacylation"/>
    <property type="evidence" value="ECO:0007669"/>
    <property type="project" value="UniProtKB-UniRule"/>
</dbReference>
<dbReference type="CDD" id="cd00807">
    <property type="entry name" value="GlnRS_core"/>
    <property type="match status" value="1"/>
</dbReference>
<dbReference type="FunFam" id="1.10.1160.10:FF:000001">
    <property type="entry name" value="Glutamine--tRNA ligase"/>
    <property type="match status" value="1"/>
</dbReference>
<dbReference type="FunFam" id="2.40.240.10:FF:000001">
    <property type="entry name" value="Glutamine--tRNA ligase"/>
    <property type="match status" value="1"/>
</dbReference>
<dbReference type="FunFam" id="2.40.240.10:FF:000003">
    <property type="entry name" value="Glutamine--tRNA ligase"/>
    <property type="match status" value="1"/>
</dbReference>
<dbReference type="FunFam" id="3.90.800.10:FF:000001">
    <property type="entry name" value="Glutamine--tRNA ligase"/>
    <property type="match status" value="1"/>
</dbReference>
<dbReference type="FunFam" id="3.40.50.620:FF:000037">
    <property type="entry name" value="Glutamine--tRNA ligase cytoplasmic"/>
    <property type="match status" value="1"/>
</dbReference>
<dbReference type="Gene3D" id="1.10.1160.10">
    <property type="entry name" value="Glutamyl-trna Synthetase, Domain 2"/>
    <property type="match status" value="1"/>
</dbReference>
<dbReference type="Gene3D" id="3.90.800.10">
    <property type="entry name" value="Glutamyl-tRNA Synthetase, Domain 3"/>
    <property type="match status" value="1"/>
</dbReference>
<dbReference type="Gene3D" id="3.40.50.620">
    <property type="entry name" value="HUPs"/>
    <property type="match status" value="1"/>
</dbReference>
<dbReference type="Gene3D" id="2.40.240.10">
    <property type="entry name" value="Ribosomal Protein L25, Chain P"/>
    <property type="match status" value="2"/>
</dbReference>
<dbReference type="HAMAP" id="MF_00126">
    <property type="entry name" value="Gln_tRNA_synth"/>
    <property type="match status" value="1"/>
</dbReference>
<dbReference type="InterPro" id="IPR001412">
    <property type="entry name" value="aa-tRNA-synth_I_CS"/>
</dbReference>
<dbReference type="InterPro" id="IPR004514">
    <property type="entry name" value="Gln-tRNA-synth"/>
</dbReference>
<dbReference type="InterPro" id="IPR050132">
    <property type="entry name" value="Gln/Glu-tRNA_Ligase"/>
</dbReference>
<dbReference type="InterPro" id="IPR022861">
    <property type="entry name" value="Gln_tRNA_ligase_bac"/>
</dbReference>
<dbReference type="InterPro" id="IPR000924">
    <property type="entry name" value="Glu/Gln-tRNA-synth"/>
</dbReference>
<dbReference type="InterPro" id="IPR020058">
    <property type="entry name" value="Glu/Gln-tRNA-synth_Ib_cat-dom"/>
</dbReference>
<dbReference type="InterPro" id="IPR020059">
    <property type="entry name" value="Glu/Gln-tRNA-synth_Ib_codon-bd"/>
</dbReference>
<dbReference type="InterPro" id="IPR020061">
    <property type="entry name" value="Glu_tRNA_lig_a-bdl"/>
</dbReference>
<dbReference type="InterPro" id="IPR020056">
    <property type="entry name" value="Rbsml_bL25/Gln-tRNA_synth_N"/>
</dbReference>
<dbReference type="InterPro" id="IPR011035">
    <property type="entry name" value="Ribosomal_bL25/Gln-tRNA_synth"/>
</dbReference>
<dbReference type="InterPro" id="IPR014729">
    <property type="entry name" value="Rossmann-like_a/b/a_fold"/>
</dbReference>
<dbReference type="InterPro" id="IPR049437">
    <property type="entry name" value="tRNA-synt_1c_C2"/>
</dbReference>
<dbReference type="NCBIfam" id="TIGR00440">
    <property type="entry name" value="glnS"/>
    <property type="match status" value="1"/>
</dbReference>
<dbReference type="NCBIfam" id="NF011291">
    <property type="entry name" value="PRK14703.1"/>
    <property type="match status" value="1"/>
</dbReference>
<dbReference type="PANTHER" id="PTHR43097:SF5">
    <property type="entry name" value="GLUTAMATE--TRNA LIGASE"/>
    <property type="match status" value="1"/>
</dbReference>
<dbReference type="PANTHER" id="PTHR43097">
    <property type="entry name" value="GLUTAMINE-TRNA LIGASE"/>
    <property type="match status" value="1"/>
</dbReference>
<dbReference type="Pfam" id="PF00749">
    <property type="entry name" value="tRNA-synt_1c"/>
    <property type="match status" value="1"/>
</dbReference>
<dbReference type="Pfam" id="PF03950">
    <property type="entry name" value="tRNA-synt_1c_C"/>
    <property type="match status" value="1"/>
</dbReference>
<dbReference type="Pfam" id="PF20974">
    <property type="entry name" value="tRNA-synt_1c_C2"/>
    <property type="match status" value="1"/>
</dbReference>
<dbReference type="PRINTS" id="PR00987">
    <property type="entry name" value="TRNASYNTHGLU"/>
</dbReference>
<dbReference type="SUPFAM" id="SSF52374">
    <property type="entry name" value="Nucleotidylyl transferase"/>
    <property type="match status" value="1"/>
</dbReference>
<dbReference type="SUPFAM" id="SSF50715">
    <property type="entry name" value="Ribosomal protein L25-like"/>
    <property type="match status" value="1"/>
</dbReference>
<dbReference type="PROSITE" id="PS00178">
    <property type="entry name" value="AA_TRNA_LIGASE_I"/>
    <property type="match status" value="1"/>
</dbReference>
<name>SYQ_SHIF8</name>
<protein>
    <recommendedName>
        <fullName evidence="1">Glutamine--tRNA ligase</fullName>
        <ecNumber evidence="1">6.1.1.18</ecNumber>
    </recommendedName>
    <alternativeName>
        <fullName evidence="1">Glutaminyl-tRNA synthetase</fullName>
        <shortName evidence="1">GlnRS</shortName>
    </alternativeName>
</protein>
<comment type="catalytic activity">
    <reaction evidence="1">
        <text>tRNA(Gln) + L-glutamine + ATP = L-glutaminyl-tRNA(Gln) + AMP + diphosphate</text>
        <dbReference type="Rhea" id="RHEA:20121"/>
        <dbReference type="Rhea" id="RHEA-COMP:9662"/>
        <dbReference type="Rhea" id="RHEA-COMP:9681"/>
        <dbReference type="ChEBI" id="CHEBI:30616"/>
        <dbReference type="ChEBI" id="CHEBI:33019"/>
        <dbReference type="ChEBI" id="CHEBI:58359"/>
        <dbReference type="ChEBI" id="CHEBI:78442"/>
        <dbReference type="ChEBI" id="CHEBI:78521"/>
        <dbReference type="ChEBI" id="CHEBI:456215"/>
        <dbReference type="EC" id="6.1.1.18"/>
    </reaction>
</comment>
<comment type="subunit">
    <text evidence="1">Monomer.</text>
</comment>
<comment type="subcellular location">
    <subcellularLocation>
        <location evidence="1">Cytoplasm</location>
    </subcellularLocation>
</comment>
<comment type="similarity">
    <text evidence="1">Belongs to the class-I aminoacyl-tRNA synthetase family.</text>
</comment>
<feature type="chain" id="PRO_1000016298" description="Glutamine--tRNA ligase">
    <location>
        <begin position="1"/>
        <end position="554"/>
    </location>
</feature>
<feature type="region of interest" description="Interaction with tRNA" evidence="1">
    <location>
        <begin position="317"/>
        <end position="324"/>
    </location>
</feature>
<feature type="short sequence motif" description="'HIGH' region" evidence="1">
    <location>
        <begin position="34"/>
        <end position="44"/>
    </location>
</feature>
<feature type="short sequence motif" description="'KMSKS' region" evidence="1">
    <location>
        <begin position="268"/>
        <end position="272"/>
    </location>
</feature>
<feature type="binding site" evidence="1">
    <location>
        <begin position="35"/>
        <end position="37"/>
    </location>
    <ligand>
        <name>ATP</name>
        <dbReference type="ChEBI" id="CHEBI:30616"/>
    </ligand>
</feature>
<feature type="binding site" evidence="1">
    <location>
        <begin position="41"/>
        <end position="47"/>
    </location>
    <ligand>
        <name>ATP</name>
        <dbReference type="ChEBI" id="CHEBI:30616"/>
    </ligand>
</feature>
<feature type="binding site" evidence="1">
    <location>
        <position position="67"/>
    </location>
    <ligand>
        <name>L-glutamine</name>
        <dbReference type="ChEBI" id="CHEBI:58359"/>
    </ligand>
</feature>
<feature type="binding site" evidence="1">
    <location>
        <position position="212"/>
    </location>
    <ligand>
        <name>L-glutamine</name>
        <dbReference type="ChEBI" id="CHEBI:58359"/>
    </ligand>
</feature>
<feature type="binding site" evidence="1">
    <location>
        <position position="231"/>
    </location>
    <ligand>
        <name>ATP</name>
        <dbReference type="ChEBI" id="CHEBI:30616"/>
    </ligand>
</feature>
<feature type="binding site" evidence="1">
    <location>
        <begin position="261"/>
        <end position="262"/>
    </location>
    <ligand>
        <name>ATP</name>
        <dbReference type="ChEBI" id="CHEBI:30616"/>
    </ligand>
</feature>
<feature type="binding site" evidence="1">
    <location>
        <begin position="269"/>
        <end position="271"/>
    </location>
    <ligand>
        <name>ATP</name>
        <dbReference type="ChEBI" id="CHEBI:30616"/>
    </ligand>
</feature>